<reference key="1">
    <citation type="journal article" date="1996" name="J. Cell Biol.">
        <title>Pantophysin is a ubiquitously expressed synaptophysin homologue and defines constitutive transport vesicles.</title>
        <authorList>
            <person name="Haass N.K."/>
            <person name="Kartenbeck J."/>
            <person name="Leube R.E."/>
        </authorList>
    </citation>
    <scope>NUCLEOTIDE SEQUENCE [GENOMIC DNA] (ISOFORM 1)</scope>
    <scope>SUBCELLULAR LOCATION</scope>
    <scope>TISSUE SPECIFICITY</scope>
    <source>
        <strain>129/SvJ</strain>
    </source>
</reference>
<reference key="2">
    <citation type="journal article" date="2005" name="Science">
        <title>The transcriptional landscape of the mammalian genome.</title>
        <authorList>
            <person name="Carninci P."/>
            <person name="Kasukawa T."/>
            <person name="Katayama S."/>
            <person name="Gough J."/>
            <person name="Frith M.C."/>
            <person name="Maeda N."/>
            <person name="Oyama R."/>
            <person name="Ravasi T."/>
            <person name="Lenhard B."/>
            <person name="Wells C."/>
            <person name="Kodzius R."/>
            <person name="Shimokawa K."/>
            <person name="Bajic V.B."/>
            <person name="Brenner S.E."/>
            <person name="Batalov S."/>
            <person name="Forrest A.R."/>
            <person name="Zavolan M."/>
            <person name="Davis M.J."/>
            <person name="Wilming L.G."/>
            <person name="Aidinis V."/>
            <person name="Allen J.E."/>
            <person name="Ambesi-Impiombato A."/>
            <person name="Apweiler R."/>
            <person name="Aturaliya R.N."/>
            <person name="Bailey T.L."/>
            <person name="Bansal M."/>
            <person name="Baxter L."/>
            <person name="Beisel K.W."/>
            <person name="Bersano T."/>
            <person name="Bono H."/>
            <person name="Chalk A.M."/>
            <person name="Chiu K.P."/>
            <person name="Choudhary V."/>
            <person name="Christoffels A."/>
            <person name="Clutterbuck D.R."/>
            <person name="Crowe M.L."/>
            <person name="Dalla E."/>
            <person name="Dalrymple B.P."/>
            <person name="de Bono B."/>
            <person name="Della Gatta G."/>
            <person name="di Bernardo D."/>
            <person name="Down T."/>
            <person name="Engstrom P."/>
            <person name="Fagiolini M."/>
            <person name="Faulkner G."/>
            <person name="Fletcher C.F."/>
            <person name="Fukushima T."/>
            <person name="Furuno M."/>
            <person name="Futaki S."/>
            <person name="Gariboldi M."/>
            <person name="Georgii-Hemming P."/>
            <person name="Gingeras T.R."/>
            <person name="Gojobori T."/>
            <person name="Green R.E."/>
            <person name="Gustincich S."/>
            <person name="Harbers M."/>
            <person name="Hayashi Y."/>
            <person name="Hensch T.K."/>
            <person name="Hirokawa N."/>
            <person name="Hill D."/>
            <person name="Huminiecki L."/>
            <person name="Iacono M."/>
            <person name="Ikeo K."/>
            <person name="Iwama A."/>
            <person name="Ishikawa T."/>
            <person name="Jakt M."/>
            <person name="Kanapin A."/>
            <person name="Katoh M."/>
            <person name="Kawasawa Y."/>
            <person name="Kelso J."/>
            <person name="Kitamura H."/>
            <person name="Kitano H."/>
            <person name="Kollias G."/>
            <person name="Krishnan S.P."/>
            <person name="Kruger A."/>
            <person name="Kummerfeld S.K."/>
            <person name="Kurochkin I.V."/>
            <person name="Lareau L.F."/>
            <person name="Lazarevic D."/>
            <person name="Lipovich L."/>
            <person name="Liu J."/>
            <person name="Liuni S."/>
            <person name="McWilliam S."/>
            <person name="Madan Babu M."/>
            <person name="Madera M."/>
            <person name="Marchionni L."/>
            <person name="Matsuda H."/>
            <person name="Matsuzawa S."/>
            <person name="Miki H."/>
            <person name="Mignone F."/>
            <person name="Miyake S."/>
            <person name="Morris K."/>
            <person name="Mottagui-Tabar S."/>
            <person name="Mulder N."/>
            <person name="Nakano N."/>
            <person name="Nakauchi H."/>
            <person name="Ng P."/>
            <person name="Nilsson R."/>
            <person name="Nishiguchi S."/>
            <person name="Nishikawa S."/>
            <person name="Nori F."/>
            <person name="Ohara O."/>
            <person name="Okazaki Y."/>
            <person name="Orlando V."/>
            <person name="Pang K.C."/>
            <person name="Pavan W.J."/>
            <person name="Pavesi G."/>
            <person name="Pesole G."/>
            <person name="Petrovsky N."/>
            <person name="Piazza S."/>
            <person name="Reed J."/>
            <person name="Reid J.F."/>
            <person name="Ring B.Z."/>
            <person name="Ringwald M."/>
            <person name="Rost B."/>
            <person name="Ruan Y."/>
            <person name="Salzberg S.L."/>
            <person name="Sandelin A."/>
            <person name="Schneider C."/>
            <person name="Schoenbach C."/>
            <person name="Sekiguchi K."/>
            <person name="Semple C.A."/>
            <person name="Seno S."/>
            <person name="Sessa L."/>
            <person name="Sheng Y."/>
            <person name="Shibata Y."/>
            <person name="Shimada H."/>
            <person name="Shimada K."/>
            <person name="Silva D."/>
            <person name="Sinclair B."/>
            <person name="Sperling S."/>
            <person name="Stupka E."/>
            <person name="Sugiura K."/>
            <person name="Sultana R."/>
            <person name="Takenaka Y."/>
            <person name="Taki K."/>
            <person name="Tammoja K."/>
            <person name="Tan S.L."/>
            <person name="Tang S."/>
            <person name="Taylor M.S."/>
            <person name="Tegner J."/>
            <person name="Teichmann S.A."/>
            <person name="Ueda H.R."/>
            <person name="van Nimwegen E."/>
            <person name="Verardo R."/>
            <person name="Wei C.L."/>
            <person name="Yagi K."/>
            <person name="Yamanishi H."/>
            <person name="Zabarovsky E."/>
            <person name="Zhu S."/>
            <person name="Zimmer A."/>
            <person name="Hide W."/>
            <person name="Bult C."/>
            <person name="Grimmond S.M."/>
            <person name="Teasdale R.D."/>
            <person name="Liu E.T."/>
            <person name="Brusic V."/>
            <person name="Quackenbush J."/>
            <person name="Wahlestedt C."/>
            <person name="Mattick J.S."/>
            <person name="Hume D.A."/>
            <person name="Kai C."/>
            <person name="Sasaki D."/>
            <person name="Tomaru Y."/>
            <person name="Fukuda S."/>
            <person name="Kanamori-Katayama M."/>
            <person name="Suzuki M."/>
            <person name="Aoki J."/>
            <person name="Arakawa T."/>
            <person name="Iida J."/>
            <person name="Imamura K."/>
            <person name="Itoh M."/>
            <person name="Kato T."/>
            <person name="Kawaji H."/>
            <person name="Kawagashira N."/>
            <person name="Kawashima T."/>
            <person name="Kojima M."/>
            <person name="Kondo S."/>
            <person name="Konno H."/>
            <person name="Nakano K."/>
            <person name="Ninomiya N."/>
            <person name="Nishio T."/>
            <person name="Okada M."/>
            <person name="Plessy C."/>
            <person name="Shibata K."/>
            <person name="Shiraki T."/>
            <person name="Suzuki S."/>
            <person name="Tagami M."/>
            <person name="Waki K."/>
            <person name="Watahiki A."/>
            <person name="Okamura-Oho Y."/>
            <person name="Suzuki H."/>
            <person name="Kawai J."/>
            <person name="Hayashizaki Y."/>
        </authorList>
    </citation>
    <scope>NUCLEOTIDE SEQUENCE [LARGE SCALE MRNA] (ISOFORM 2)</scope>
    <source>
        <strain>C57BL/6J</strain>
        <tissue>Stomach</tissue>
    </source>
</reference>
<reference key="3">
    <citation type="journal article" date="2004" name="Genome Res.">
        <title>The status, quality, and expansion of the NIH full-length cDNA project: the Mammalian Gene Collection (MGC).</title>
        <authorList>
            <consortium name="The MGC Project Team"/>
        </authorList>
    </citation>
    <scope>NUCLEOTIDE SEQUENCE [LARGE SCALE MRNA] (ISOFORM 1)</scope>
    <source>
        <tissue>Testis</tissue>
    </source>
</reference>
<reference key="4">
    <citation type="submission" date="2007-04" db="UniProtKB">
        <authorList>
            <person name="Lubec G."/>
            <person name="Kang S.U."/>
        </authorList>
    </citation>
    <scope>PROTEIN SEQUENCE OF 58-66</scope>
    <scope>IDENTIFICATION BY MASS SPECTROMETRY</scope>
    <source>
        <strain>C57BL/6J</strain>
        <tissue>Brain</tissue>
    </source>
</reference>
<reference key="5">
    <citation type="journal article" date="2009" name="Mol. Cell. Proteomics">
        <title>The mouse C2C12 myoblast cell surface N-linked glycoproteome: identification, glycosite occupancy, and membrane orientation.</title>
        <authorList>
            <person name="Gundry R.L."/>
            <person name="Raginski K."/>
            <person name="Tarasova Y."/>
            <person name="Tchernyshyov I."/>
            <person name="Bausch-Fluck D."/>
            <person name="Elliott S.T."/>
            <person name="Boheler K.R."/>
            <person name="Van Eyk J.E."/>
            <person name="Wollscheid B."/>
        </authorList>
    </citation>
    <scope>GLYCOSYLATION [LARGE SCALE ANALYSIS] AT ASN-72</scope>
    <source>
        <tissue>Myoblast</tissue>
    </source>
</reference>
<reference key="6">
    <citation type="journal article" date="2009" name="Nat. Biotechnol.">
        <title>Mass-spectrometric identification and relative quantification of N-linked cell surface glycoproteins.</title>
        <authorList>
            <person name="Wollscheid B."/>
            <person name="Bausch-Fluck D."/>
            <person name="Henderson C."/>
            <person name="O'Brien R."/>
            <person name="Bibel M."/>
            <person name="Schiess R."/>
            <person name="Aebersold R."/>
            <person name="Watts J.D."/>
        </authorList>
    </citation>
    <scope>GLYCOSYLATION [LARGE SCALE ANALYSIS] AT ASN-72 AND ASN-95</scope>
</reference>
<reference key="7">
    <citation type="journal article" date="2010" name="Cell">
        <title>A tissue-specific atlas of mouse protein phosphorylation and expression.</title>
        <authorList>
            <person name="Huttlin E.L."/>
            <person name="Jedrychowski M.P."/>
            <person name="Elias J.E."/>
            <person name="Goswami T."/>
            <person name="Rad R."/>
            <person name="Beausoleil S.A."/>
            <person name="Villen J."/>
            <person name="Haas W."/>
            <person name="Sowa M.E."/>
            <person name="Gygi S.P."/>
        </authorList>
    </citation>
    <scope>IDENTIFICATION BY MASS SPECTROMETRY [LARGE SCALE ANALYSIS]</scope>
    <source>
        <tissue>Brown adipose tissue</tissue>
        <tissue>Heart</tissue>
        <tissue>Kidney</tissue>
        <tissue>Liver</tissue>
        <tissue>Lung</tissue>
        <tissue>Pancreas</tissue>
        <tissue>Testis</tissue>
    </source>
</reference>
<sequence length="261" mass="28899">MASKANMVRQRFSRLSQRMSAFQINLNPLKEPLGFIKILEWFASIFAFATCGGFKGKTEIQVNCPKVGVNKNQTVTATFGYPFRLNQASFHTPPNVSVCDVNWEKHVLIGDYSSSAQFYVTFAVFVFLYCIAALLLYVGYTNLYRDSRKLPMIDFIVTLVATFLWLVSSSAWAKALTDIKVATGHRIVEELEICNPESGVSCYFVSVTSMGSLNVSVIFGFLNMILWGGNAWFVYKETSLHSPSNTSASHSQGGGPPTSGM</sequence>
<protein>
    <recommendedName>
        <fullName>Synaptophysin-like protein 1</fullName>
    </recommendedName>
    <alternativeName>
        <fullName>Pantophysin</fullName>
    </alternativeName>
</protein>
<comment type="subcellular location">
    <subcellularLocation>
        <location evidence="7">Cytoplasmic vesicle membrane</location>
        <topology evidence="7">Multi-pass membrane protein</topology>
    </subcellularLocation>
    <subcellularLocation>
        <location evidence="1">Melanosome</location>
    </subcellularLocation>
    <text>Cytoplasmic transport vesicles.</text>
</comment>
<comment type="alternative products">
    <event type="alternative splicing"/>
    <isoform>
        <id>O09117-1</id>
        <name>1</name>
        <sequence type="displayed"/>
    </isoform>
    <isoform>
        <id>O09117-2</id>
        <name>2</name>
        <sequence type="described" ref="VSP_008558"/>
    </isoform>
</comment>
<comment type="tissue specificity">
    <text evidence="7">Ubiquitously expressed.</text>
</comment>
<comment type="similarity">
    <text evidence="9">Belongs to the synaptophysin/synaptobrevin family.</text>
</comment>
<comment type="sequence caution" evidence="9">
    <conflict type="erroneous initiation">
        <sequence resource="EMBL-CDS" id="BAC33808"/>
    </conflict>
</comment>
<feature type="chain" id="PRO_0000179165" description="Synaptophysin-like protein 1">
    <location>
        <begin position="1"/>
        <end position="261"/>
    </location>
</feature>
<feature type="topological domain" description="Cytoplasmic" evidence="2">
    <location>
        <begin position="1"/>
        <end position="33"/>
    </location>
</feature>
<feature type="transmembrane region" description="Helical" evidence="2">
    <location>
        <begin position="34"/>
        <end position="54"/>
    </location>
</feature>
<feature type="topological domain" description="Vesicular" evidence="2">
    <location>
        <begin position="55"/>
        <end position="117"/>
    </location>
</feature>
<feature type="transmembrane region" description="Helical" evidence="2">
    <location>
        <begin position="118"/>
        <end position="138"/>
    </location>
</feature>
<feature type="topological domain" description="Cytoplasmic" evidence="2">
    <location>
        <begin position="139"/>
        <end position="151"/>
    </location>
</feature>
<feature type="transmembrane region" description="Helical" evidence="2">
    <location>
        <begin position="152"/>
        <end position="172"/>
    </location>
</feature>
<feature type="topological domain" description="Vesicular" evidence="2">
    <location>
        <begin position="173"/>
        <end position="214"/>
    </location>
</feature>
<feature type="transmembrane region" description="Helical" evidence="2">
    <location>
        <begin position="215"/>
        <end position="235"/>
    </location>
</feature>
<feature type="topological domain" description="Cytoplasmic" evidence="2">
    <location>
        <begin position="236"/>
        <end position="261"/>
    </location>
</feature>
<feature type="domain" description="MARVEL" evidence="3">
    <location>
        <begin position="28"/>
        <end position="239"/>
    </location>
</feature>
<feature type="region of interest" description="Disordered" evidence="4">
    <location>
        <begin position="241"/>
        <end position="261"/>
    </location>
</feature>
<feature type="compositionally biased region" description="Polar residues" evidence="4">
    <location>
        <begin position="241"/>
        <end position="251"/>
    </location>
</feature>
<feature type="compositionally biased region" description="Gly residues" evidence="4">
    <location>
        <begin position="252"/>
        <end position="261"/>
    </location>
</feature>
<feature type="glycosylation site" description="N-linked (GlcNAc...) asparagine" evidence="5 6">
    <location>
        <position position="72"/>
    </location>
</feature>
<feature type="glycosylation site" description="N-linked (GlcNAc...) asparagine" evidence="5">
    <location>
        <position position="95"/>
    </location>
</feature>
<feature type="glycosylation site" description="N-linked (GlcNAc...) asparagine" evidence="2">
    <location>
        <position position="214"/>
    </location>
</feature>
<feature type="splice variant" id="VSP_008558" description="In isoform 2." evidence="8">
    <location>
        <begin position="1"/>
        <end position="18"/>
    </location>
</feature>
<feature type="sequence conflict" description="In Ref. 1; AAB39891." evidence="9" ref="1">
    <original>S</original>
    <variation>N</variation>
    <location>
        <position position="97"/>
    </location>
</feature>
<feature type="sequence conflict" description="In Ref. 2; BAC35036." evidence="9" ref="2">
    <original>C</original>
    <variation>R</variation>
    <location>
        <position position="202"/>
    </location>
</feature>
<gene>
    <name type="primary">Sypl1</name>
    <name type="synonym">Pphn</name>
    <name type="synonym">Sypl</name>
</gene>
<organism>
    <name type="scientific">Mus musculus</name>
    <name type="common">Mouse</name>
    <dbReference type="NCBI Taxonomy" id="10090"/>
    <lineage>
        <taxon>Eukaryota</taxon>
        <taxon>Metazoa</taxon>
        <taxon>Chordata</taxon>
        <taxon>Craniata</taxon>
        <taxon>Vertebrata</taxon>
        <taxon>Euteleostomi</taxon>
        <taxon>Mammalia</taxon>
        <taxon>Eutheria</taxon>
        <taxon>Euarchontoglires</taxon>
        <taxon>Glires</taxon>
        <taxon>Rodentia</taxon>
        <taxon>Myomorpha</taxon>
        <taxon>Muroidea</taxon>
        <taxon>Muridae</taxon>
        <taxon>Murinae</taxon>
        <taxon>Mus</taxon>
        <taxon>Mus</taxon>
    </lineage>
</organism>
<keyword id="KW-0025">Alternative splicing</keyword>
<keyword id="KW-0968">Cytoplasmic vesicle</keyword>
<keyword id="KW-0903">Direct protein sequencing</keyword>
<keyword id="KW-0325">Glycoprotein</keyword>
<keyword id="KW-0472">Membrane</keyword>
<keyword id="KW-1185">Reference proteome</keyword>
<keyword id="KW-0812">Transmembrane</keyword>
<keyword id="KW-1133">Transmembrane helix</keyword>
<dbReference type="EMBL" id="AF081501">
    <property type="protein sequence ID" value="AAB39891.1"/>
    <property type="molecule type" value="Genomic_DNA"/>
</dbReference>
<dbReference type="EMBL" id="AK049545">
    <property type="protein sequence ID" value="BAC33803.1"/>
    <property type="molecule type" value="mRNA"/>
</dbReference>
<dbReference type="EMBL" id="AK049556">
    <property type="protein sequence ID" value="BAC33808.1"/>
    <property type="status" value="ALT_INIT"/>
    <property type="molecule type" value="mRNA"/>
</dbReference>
<dbReference type="EMBL" id="AK052556">
    <property type="protein sequence ID" value="BAC35036.1"/>
    <property type="molecule type" value="mRNA"/>
</dbReference>
<dbReference type="EMBL" id="BC060971">
    <property type="protein sequence ID" value="AAH60971.1"/>
    <property type="molecule type" value="mRNA"/>
</dbReference>
<dbReference type="CCDS" id="CCDS25872.1">
    <molecule id="O09117-1"/>
</dbReference>
<dbReference type="CCDS" id="CCDS25873.1">
    <molecule id="O09117-2"/>
</dbReference>
<dbReference type="RefSeq" id="NP_038663.2">
    <molecule id="O09117-1"/>
    <property type="nucleotide sequence ID" value="NM_013635.3"/>
</dbReference>
<dbReference type="RefSeq" id="NP_942003.1">
    <molecule id="O09117-2"/>
    <property type="nucleotide sequence ID" value="NM_198710.3"/>
</dbReference>
<dbReference type="SMR" id="O09117"/>
<dbReference type="FunCoup" id="O09117">
    <property type="interactions" value="1226"/>
</dbReference>
<dbReference type="IntAct" id="O09117">
    <property type="interactions" value="1"/>
</dbReference>
<dbReference type="MINT" id="O09117"/>
<dbReference type="STRING" id="10090.ENSMUSP00000075990"/>
<dbReference type="GlyConnect" id="2749">
    <property type="glycosylation" value="9 N-Linked glycans (1 site)"/>
</dbReference>
<dbReference type="GlyCosmos" id="O09117">
    <property type="glycosylation" value="3 sites, 9 glycans"/>
</dbReference>
<dbReference type="GlyGen" id="O09117">
    <property type="glycosylation" value="5 sites, 12 N-linked glycans (3 sites), 1 O-linked glycan (1 site)"/>
</dbReference>
<dbReference type="iPTMnet" id="O09117"/>
<dbReference type="PhosphoSitePlus" id="O09117"/>
<dbReference type="SwissPalm" id="O09117"/>
<dbReference type="jPOST" id="O09117"/>
<dbReference type="PaxDb" id="10090-ENSMUSP00000075990"/>
<dbReference type="PeptideAtlas" id="O09117"/>
<dbReference type="ProteomicsDB" id="254507">
    <molecule id="O09117-1"/>
</dbReference>
<dbReference type="ProteomicsDB" id="254508">
    <molecule id="O09117-2"/>
</dbReference>
<dbReference type="Pumba" id="O09117"/>
<dbReference type="Antibodypedia" id="2819">
    <property type="antibodies" value="155 antibodies from 25 providers"/>
</dbReference>
<dbReference type="DNASU" id="19027"/>
<dbReference type="Ensembl" id="ENSMUST00000020885.13">
    <molecule id="O09117-2"/>
    <property type="protein sequence ID" value="ENSMUSP00000020885.7"/>
    <property type="gene ID" value="ENSMUSG00000020570.16"/>
</dbReference>
<dbReference type="Ensembl" id="ENSMUST00000076698.13">
    <molecule id="O09117-1"/>
    <property type="protein sequence ID" value="ENSMUSP00000075990.6"/>
    <property type="gene ID" value="ENSMUSG00000020570.16"/>
</dbReference>
<dbReference type="GeneID" id="19027"/>
<dbReference type="KEGG" id="mmu:19027"/>
<dbReference type="UCSC" id="uc007nih.2">
    <molecule id="O09117-1"/>
    <property type="organism name" value="mouse"/>
</dbReference>
<dbReference type="AGR" id="MGI:108081"/>
<dbReference type="CTD" id="6856"/>
<dbReference type="MGI" id="MGI:108081">
    <property type="gene designation" value="Sypl1"/>
</dbReference>
<dbReference type="VEuPathDB" id="HostDB:ENSMUSG00000020570"/>
<dbReference type="eggNOG" id="ENOG502RY2D">
    <property type="taxonomic scope" value="Eukaryota"/>
</dbReference>
<dbReference type="GeneTree" id="ENSGT01030000234637"/>
<dbReference type="HOGENOM" id="CLU_064642_1_0_1"/>
<dbReference type="InParanoid" id="O09117"/>
<dbReference type="OMA" id="VYIGYKH"/>
<dbReference type="OrthoDB" id="10006326at2759"/>
<dbReference type="PhylomeDB" id="O09117"/>
<dbReference type="TreeFam" id="TF315804"/>
<dbReference type="BioGRID-ORCS" id="19027">
    <property type="hits" value="3 hits in 77 CRISPR screens"/>
</dbReference>
<dbReference type="ChiTaRS" id="Sypl">
    <property type="organism name" value="mouse"/>
</dbReference>
<dbReference type="PRO" id="PR:O09117"/>
<dbReference type="Proteomes" id="UP000000589">
    <property type="component" value="Chromosome 12"/>
</dbReference>
<dbReference type="RNAct" id="O09117">
    <property type="molecule type" value="protein"/>
</dbReference>
<dbReference type="Bgee" id="ENSMUSG00000020570">
    <property type="expression patterns" value="Expressed in spermatid and 261 other cell types or tissues"/>
</dbReference>
<dbReference type="ExpressionAtlas" id="O09117">
    <property type="expression patterns" value="baseline and differential"/>
</dbReference>
<dbReference type="GO" id="GO:0030659">
    <property type="term" value="C:cytoplasmic vesicle membrane"/>
    <property type="evidence" value="ECO:0007669"/>
    <property type="project" value="UniProtKB-SubCell"/>
</dbReference>
<dbReference type="GO" id="GO:0042470">
    <property type="term" value="C:melanosome"/>
    <property type="evidence" value="ECO:0007669"/>
    <property type="project" value="UniProtKB-SubCell"/>
</dbReference>
<dbReference type="GO" id="GO:0016020">
    <property type="term" value="C:membrane"/>
    <property type="evidence" value="ECO:0000314"/>
    <property type="project" value="MGI"/>
</dbReference>
<dbReference type="GO" id="GO:0030141">
    <property type="term" value="C:secretory granule"/>
    <property type="evidence" value="ECO:0000314"/>
    <property type="project" value="MGI"/>
</dbReference>
<dbReference type="GO" id="GO:0008021">
    <property type="term" value="C:synaptic vesicle"/>
    <property type="evidence" value="ECO:0007669"/>
    <property type="project" value="InterPro"/>
</dbReference>
<dbReference type="InterPro" id="IPR008253">
    <property type="entry name" value="Marvel"/>
</dbReference>
<dbReference type="InterPro" id="IPR001285">
    <property type="entry name" value="Synaptophysin/porin"/>
</dbReference>
<dbReference type="PANTHER" id="PTHR10306">
    <property type="entry name" value="SYNAPTOPHYSIN"/>
    <property type="match status" value="1"/>
</dbReference>
<dbReference type="PANTHER" id="PTHR10306:SF9">
    <property type="entry name" value="SYNAPTOPHYSIN-LIKE PROTEIN 1"/>
    <property type="match status" value="1"/>
</dbReference>
<dbReference type="Pfam" id="PF01284">
    <property type="entry name" value="MARVEL"/>
    <property type="match status" value="1"/>
</dbReference>
<dbReference type="PRINTS" id="PR00220">
    <property type="entry name" value="SYNAPTOPHYSN"/>
</dbReference>
<dbReference type="PROSITE" id="PS51225">
    <property type="entry name" value="MARVEL"/>
    <property type="match status" value="1"/>
</dbReference>
<accession>O09117</accession>
<accession>Q8BQI8</accession>
<accession>Q8BQJ1</accession>
<accession>Q8C749</accession>
<name>SYPL1_MOUSE</name>
<evidence type="ECO:0000250" key="1"/>
<evidence type="ECO:0000255" key="2"/>
<evidence type="ECO:0000255" key="3">
    <source>
        <dbReference type="PROSITE-ProRule" id="PRU00581"/>
    </source>
</evidence>
<evidence type="ECO:0000256" key="4">
    <source>
        <dbReference type="SAM" id="MobiDB-lite"/>
    </source>
</evidence>
<evidence type="ECO:0000269" key="5">
    <source>
    </source>
</evidence>
<evidence type="ECO:0000269" key="6">
    <source>
    </source>
</evidence>
<evidence type="ECO:0000269" key="7">
    <source>
    </source>
</evidence>
<evidence type="ECO:0000303" key="8">
    <source>
    </source>
</evidence>
<evidence type="ECO:0000305" key="9"/>
<proteinExistence type="evidence at protein level"/>